<evidence type="ECO:0000255" key="1">
    <source>
        <dbReference type="HAMAP-Rule" id="MF_00170"/>
    </source>
</evidence>
<accession>B0U767</accession>
<comment type="function">
    <text evidence="1">Catalyzes the reversible conversion of ribose-5-phosphate to ribulose 5-phosphate.</text>
</comment>
<comment type="catalytic activity">
    <reaction evidence="1">
        <text>aldehydo-D-ribose 5-phosphate = D-ribulose 5-phosphate</text>
        <dbReference type="Rhea" id="RHEA:14657"/>
        <dbReference type="ChEBI" id="CHEBI:58121"/>
        <dbReference type="ChEBI" id="CHEBI:58273"/>
        <dbReference type="EC" id="5.3.1.6"/>
    </reaction>
</comment>
<comment type="pathway">
    <text evidence="1">Carbohydrate degradation; pentose phosphate pathway; D-ribose 5-phosphate from D-ribulose 5-phosphate (non-oxidative stage): step 1/1.</text>
</comment>
<comment type="subunit">
    <text evidence="1">Homodimer.</text>
</comment>
<comment type="similarity">
    <text evidence="1">Belongs to the ribose 5-phosphate isomerase family.</text>
</comment>
<gene>
    <name evidence="1" type="primary">rpiA</name>
    <name type="ordered locus">Xfasm12_0960</name>
</gene>
<keyword id="KW-0413">Isomerase</keyword>
<sequence>MSEAKRRAAEKAIEYVENDMIIGVGTGSTVAYFIDALGRTPKRIKGAVSSSEQSTAHLKQHGIEVLELNHTGTLPLYVDGADECDPYKRLIKGGGASLTREKIIAEASKQFICIIDPNKQVATLGKFPLPIEVIPMARSLVARQIMARTDGQPVWREGVITDNGNVILDVHHLCITDPVKLEQELNQIPGVVCVGLFARRCADLVIIGSEPPHIL</sequence>
<feature type="chain" id="PRO_1000097707" description="Ribose-5-phosphate isomerase A">
    <location>
        <begin position="1"/>
        <end position="215"/>
    </location>
</feature>
<feature type="active site" description="Proton acceptor" evidence="1">
    <location>
        <position position="101"/>
    </location>
</feature>
<feature type="binding site" evidence="1">
    <location>
        <begin position="26"/>
        <end position="29"/>
    </location>
    <ligand>
        <name>substrate</name>
    </ligand>
</feature>
<feature type="binding site" evidence="1">
    <location>
        <begin position="79"/>
        <end position="82"/>
    </location>
    <ligand>
        <name>substrate</name>
    </ligand>
</feature>
<feature type="binding site" evidence="1">
    <location>
        <begin position="92"/>
        <end position="95"/>
    </location>
    <ligand>
        <name>substrate</name>
    </ligand>
</feature>
<feature type="binding site" evidence="1">
    <location>
        <position position="119"/>
    </location>
    <ligand>
        <name>substrate</name>
    </ligand>
</feature>
<name>RPIA_XYLFM</name>
<protein>
    <recommendedName>
        <fullName evidence="1">Ribose-5-phosphate isomerase A</fullName>
        <ecNumber evidence="1">5.3.1.6</ecNumber>
    </recommendedName>
    <alternativeName>
        <fullName evidence="1">Phosphoriboisomerase A</fullName>
        <shortName evidence="1">PRI</shortName>
    </alternativeName>
</protein>
<dbReference type="EC" id="5.3.1.6" evidence="1"/>
<dbReference type="EMBL" id="CP000941">
    <property type="protein sequence ID" value="ACA11933.1"/>
    <property type="molecule type" value="Genomic_DNA"/>
</dbReference>
<dbReference type="RefSeq" id="WP_012337801.1">
    <property type="nucleotide sequence ID" value="NC_010513.1"/>
</dbReference>
<dbReference type="SMR" id="B0U767"/>
<dbReference type="KEGG" id="xfm:Xfasm12_0960"/>
<dbReference type="HOGENOM" id="CLU_056590_1_1_6"/>
<dbReference type="UniPathway" id="UPA00115">
    <property type="reaction ID" value="UER00412"/>
</dbReference>
<dbReference type="GO" id="GO:0005829">
    <property type="term" value="C:cytosol"/>
    <property type="evidence" value="ECO:0007669"/>
    <property type="project" value="TreeGrafter"/>
</dbReference>
<dbReference type="GO" id="GO:0004751">
    <property type="term" value="F:ribose-5-phosphate isomerase activity"/>
    <property type="evidence" value="ECO:0007669"/>
    <property type="project" value="UniProtKB-UniRule"/>
</dbReference>
<dbReference type="GO" id="GO:0006014">
    <property type="term" value="P:D-ribose metabolic process"/>
    <property type="evidence" value="ECO:0007669"/>
    <property type="project" value="TreeGrafter"/>
</dbReference>
<dbReference type="GO" id="GO:0009052">
    <property type="term" value="P:pentose-phosphate shunt, non-oxidative branch"/>
    <property type="evidence" value="ECO:0007669"/>
    <property type="project" value="UniProtKB-UniRule"/>
</dbReference>
<dbReference type="CDD" id="cd01398">
    <property type="entry name" value="RPI_A"/>
    <property type="match status" value="1"/>
</dbReference>
<dbReference type="FunFam" id="3.30.70.260:FF:000004">
    <property type="entry name" value="Ribose-5-phosphate isomerase A"/>
    <property type="match status" value="1"/>
</dbReference>
<dbReference type="FunFam" id="3.40.50.1360:FF:000001">
    <property type="entry name" value="Ribose-5-phosphate isomerase A"/>
    <property type="match status" value="1"/>
</dbReference>
<dbReference type="Gene3D" id="3.30.70.260">
    <property type="match status" value="1"/>
</dbReference>
<dbReference type="Gene3D" id="3.40.50.1360">
    <property type="match status" value="1"/>
</dbReference>
<dbReference type="HAMAP" id="MF_00170">
    <property type="entry name" value="Rib_5P_isom_A"/>
    <property type="match status" value="1"/>
</dbReference>
<dbReference type="InterPro" id="IPR037171">
    <property type="entry name" value="NagB/RpiA_transferase-like"/>
</dbReference>
<dbReference type="InterPro" id="IPR020672">
    <property type="entry name" value="Ribose5P_isomerase_typA_subgr"/>
</dbReference>
<dbReference type="InterPro" id="IPR004788">
    <property type="entry name" value="Ribose5P_isomerase_type_A"/>
</dbReference>
<dbReference type="NCBIfam" id="NF001924">
    <property type="entry name" value="PRK00702.1"/>
    <property type="match status" value="1"/>
</dbReference>
<dbReference type="NCBIfam" id="TIGR00021">
    <property type="entry name" value="rpiA"/>
    <property type="match status" value="1"/>
</dbReference>
<dbReference type="PANTHER" id="PTHR11934">
    <property type="entry name" value="RIBOSE-5-PHOSPHATE ISOMERASE"/>
    <property type="match status" value="1"/>
</dbReference>
<dbReference type="PANTHER" id="PTHR11934:SF0">
    <property type="entry name" value="RIBOSE-5-PHOSPHATE ISOMERASE"/>
    <property type="match status" value="1"/>
</dbReference>
<dbReference type="Pfam" id="PF06026">
    <property type="entry name" value="Rib_5-P_isom_A"/>
    <property type="match status" value="1"/>
</dbReference>
<dbReference type="SUPFAM" id="SSF75445">
    <property type="entry name" value="D-ribose-5-phosphate isomerase (RpiA), lid domain"/>
    <property type="match status" value="1"/>
</dbReference>
<dbReference type="SUPFAM" id="SSF100950">
    <property type="entry name" value="NagB/RpiA/CoA transferase-like"/>
    <property type="match status" value="1"/>
</dbReference>
<proteinExistence type="inferred from homology"/>
<reference key="1">
    <citation type="journal article" date="2010" name="J. Bacteriol.">
        <title>Whole genome sequences of two Xylella fastidiosa strains (M12 and M23) causing almond leaf scorch disease in California.</title>
        <authorList>
            <person name="Chen J."/>
            <person name="Xie G."/>
            <person name="Han S."/>
            <person name="Chertkov O."/>
            <person name="Sims D."/>
            <person name="Civerolo E.L."/>
        </authorList>
    </citation>
    <scope>NUCLEOTIDE SEQUENCE [LARGE SCALE GENOMIC DNA]</scope>
    <source>
        <strain>M12</strain>
    </source>
</reference>
<organism>
    <name type="scientific">Xylella fastidiosa (strain M12)</name>
    <dbReference type="NCBI Taxonomy" id="405440"/>
    <lineage>
        <taxon>Bacteria</taxon>
        <taxon>Pseudomonadati</taxon>
        <taxon>Pseudomonadota</taxon>
        <taxon>Gammaproteobacteria</taxon>
        <taxon>Lysobacterales</taxon>
        <taxon>Lysobacteraceae</taxon>
        <taxon>Xylella</taxon>
    </lineage>
</organism>